<accession>C5CC59</accession>
<sequence>MAIRKYKPTTPGLRGSSVADFAEITRSTPEKSLLRPLHKTGGRNNTGRITTRHKGGGHKRQYRLVDFRRHDKDGVPATVAHIEYDPNRTARIALLHYADGAKRYILAPAKLKQGDVVEAGPNADIKPGNNLPMRNIPVGTTIHAVELRPGGGAKMARSAGASVQLVAREGKYAQLRLPSGEIRNVDVRCRATIGEVGNAEQSNINWGKAGRMRWKGVRPTVRGVVMNPVDHPHGGGEGKTSGGRHPVNRNGKPEGRTRRPNKESDKLIVRRRRTGKNKR</sequence>
<dbReference type="EMBL" id="CP001628">
    <property type="protein sequence ID" value="ACS31200.1"/>
    <property type="molecule type" value="Genomic_DNA"/>
</dbReference>
<dbReference type="RefSeq" id="WP_010080386.1">
    <property type="nucleotide sequence ID" value="NZ_WBMF01000001.1"/>
</dbReference>
<dbReference type="SMR" id="C5CC59"/>
<dbReference type="STRING" id="465515.Mlut_17130"/>
<dbReference type="EnsemblBacteria" id="ACS31200">
    <property type="protein sequence ID" value="ACS31200"/>
    <property type="gene ID" value="Mlut_17130"/>
</dbReference>
<dbReference type="GeneID" id="93364273"/>
<dbReference type="KEGG" id="mlu:Mlut_17130"/>
<dbReference type="eggNOG" id="COG0090">
    <property type="taxonomic scope" value="Bacteria"/>
</dbReference>
<dbReference type="HOGENOM" id="CLU_036235_2_1_11"/>
<dbReference type="Proteomes" id="UP000000738">
    <property type="component" value="Chromosome"/>
</dbReference>
<dbReference type="GO" id="GO:0015934">
    <property type="term" value="C:large ribosomal subunit"/>
    <property type="evidence" value="ECO:0007669"/>
    <property type="project" value="InterPro"/>
</dbReference>
<dbReference type="GO" id="GO:0019843">
    <property type="term" value="F:rRNA binding"/>
    <property type="evidence" value="ECO:0007669"/>
    <property type="project" value="UniProtKB-UniRule"/>
</dbReference>
<dbReference type="GO" id="GO:0003735">
    <property type="term" value="F:structural constituent of ribosome"/>
    <property type="evidence" value="ECO:0007669"/>
    <property type="project" value="InterPro"/>
</dbReference>
<dbReference type="GO" id="GO:0016740">
    <property type="term" value="F:transferase activity"/>
    <property type="evidence" value="ECO:0007669"/>
    <property type="project" value="InterPro"/>
</dbReference>
<dbReference type="GO" id="GO:0002181">
    <property type="term" value="P:cytoplasmic translation"/>
    <property type="evidence" value="ECO:0007669"/>
    <property type="project" value="TreeGrafter"/>
</dbReference>
<dbReference type="FunFam" id="2.30.30.30:FF:000001">
    <property type="entry name" value="50S ribosomal protein L2"/>
    <property type="match status" value="1"/>
</dbReference>
<dbReference type="FunFam" id="2.40.50.140:FF:000003">
    <property type="entry name" value="50S ribosomal protein L2"/>
    <property type="match status" value="1"/>
</dbReference>
<dbReference type="FunFam" id="4.10.950.10:FF:000001">
    <property type="entry name" value="50S ribosomal protein L2"/>
    <property type="match status" value="1"/>
</dbReference>
<dbReference type="Gene3D" id="2.30.30.30">
    <property type="match status" value="1"/>
</dbReference>
<dbReference type="Gene3D" id="2.40.50.140">
    <property type="entry name" value="Nucleic acid-binding proteins"/>
    <property type="match status" value="1"/>
</dbReference>
<dbReference type="Gene3D" id="4.10.950.10">
    <property type="entry name" value="Ribosomal protein L2, domain 3"/>
    <property type="match status" value="1"/>
</dbReference>
<dbReference type="HAMAP" id="MF_01320_B">
    <property type="entry name" value="Ribosomal_uL2_B"/>
    <property type="match status" value="1"/>
</dbReference>
<dbReference type="InterPro" id="IPR012340">
    <property type="entry name" value="NA-bd_OB-fold"/>
</dbReference>
<dbReference type="InterPro" id="IPR014722">
    <property type="entry name" value="Rib_uL2_dom2"/>
</dbReference>
<dbReference type="InterPro" id="IPR002171">
    <property type="entry name" value="Ribosomal_uL2"/>
</dbReference>
<dbReference type="InterPro" id="IPR005880">
    <property type="entry name" value="Ribosomal_uL2_bac/org-type"/>
</dbReference>
<dbReference type="InterPro" id="IPR022669">
    <property type="entry name" value="Ribosomal_uL2_C"/>
</dbReference>
<dbReference type="InterPro" id="IPR022671">
    <property type="entry name" value="Ribosomal_uL2_CS"/>
</dbReference>
<dbReference type="InterPro" id="IPR014726">
    <property type="entry name" value="Ribosomal_uL2_dom3"/>
</dbReference>
<dbReference type="InterPro" id="IPR022666">
    <property type="entry name" value="Ribosomal_uL2_RNA-bd_dom"/>
</dbReference>
<dbReference type="InterPro" id="IPR008991">
    <property type="entry name" value="Translation_prot_SH3-like_sf"/>
</dbReference>
<dbReference type="NCBIfam" id="TIGR01171">
    <property type="entry name" value="rplB_bact"/>
    <property type="match status" value="1"/>
</dbReference>
<dbReference type="PANTHER" id="PTHR13691:SF5">
    <property type="entry name" value="LARGE RIBOSOMAL SUBUNIT PROTEIN UL2M"/>
    <property type="match status" value="1"/>
</dbReference>
<dbReference type="PANTHER" id="PTHR13691">
    <property type="entry name" value="RIBOSOMAL PROTEIN L2"/>
    <property type="match status" value="1"/>
</dbReference>
<dbReference type="Pfam" id="PF00181">
    <property type="entry name" value="Ribosomal_L2"/>
    <property type="match status" value="1"/>
</dbReference>
<dbReference type="Pfam" id="PF03947">
    <property type="entry name" value="Ribosomal_L2_C"/>
    <property type="match status" value="1"/>
</dbReference>
<dbReference type="PIRSF" id="PIRSF002158">
    <property type="entry name" value="Ribosomal_L2"/>
    <property type="match status" value="1"/>
</dbReference>
<dbReference type="SMART" id="SM01383">
    <property type="entry name" value="Ribosomal_L2"/>
    <property type="match status" value="1"/>
</dbReference>
<dbReference type="SMART" id="SM01382">
    <property type="entry name" value="Ribosomal_L2_C"/>
    <property type="match status" value="1"/>
</dbReference>
<dbReference type="SUPFAM" id="SSF50249">
    <property type="entry name" value="Nucleic acid-binding proteins"/>
    <property type="match status" value="1"/>
</dbReference>
<dbReference type="SUPFAM" id="SSF50104">
    <property type="entry name" value="Translation proteins SH3-like domain"/>
    <property type="match status" value="1"/>
</dbReference>
<dbReference type="PROSITE" id="PS00467">
    <property type="entry name" value="RIBOSOMAL_L2"/>
    <property type="match status" value="1"/>
</dbReference>
<reference key="1">
    <citation type="journal article" date="2010" name="J. Bacteriol.">
        <title>Genome sequence of the Fleming strain of Micrococcus luteus, a simple free-living actinobacterium.</title>
        <authorList>
            <person name="Young M."/>
            <person name="Artsatbanov V."/>
            <person name="Beller H.R."/>
            <person name="Chandra G."/>
            <person name="Chater K.F."/>
            <person name="Dover L.G."/>
            <person name="Goh E.B."/>
            <person name="Kahan T."/>
            <person name="Kaprelyants A.S."/>
            <person name="Kyrpides N."/>
            <person name="Lapidus A."/>
            <person name="Lowry S.R."/>
            <person name="Lykidis A."/>
            <person name="Mahillon J."/>
            <person name="Markowitz V."/>
            <person name="Mavromatis K."/>
            <person name="Mukamolova G.V."/>
            <person name="Oren A."/>
            <person name="Rokem J.S."/>
            <person name="Smith M.C."/>
            <person name="Young D.I."/>
            <person name="Greenblatt C.L."/>
        </authorList>
    </citation>
    <scope>NUCLEOTIDE SEQUENCE [LARGE SCALE GENOMIC DNA]</scope>
    <source>
        <strain>ATCC 4698 / DSM 20030 / JCM 1464 / CCM 169 / CCUG 5858 / IAM 1056 / NBRC 3333 / NCIMB 9278 / NCTC 2665 / VKM Ac-2230</strain>
    </source>
</reference>
<comment type="function">
    <text evidence="1">One of the primary rRNA binding proteins. Required for association of the 30S and 50S subunits to form the 70S ribosome, for tRNA binding and peptide bond formation. It has been suggested to have peptidyltransferase activity; this is somewhat controversial. Makes several contacts with the 16S rRNA in the 70S ribosome.</text>
</comment>
<comment type="subunit">
    <text evidence="1">Part of the 50S ribosomal subunit. Forms a bridge to the 30S subunit in the 70S ribosome.</text>
</comment>
<comment type="similarity">
    <text evidence="1">Belongs to the universal ribosomal protein uL2 family.</text>
</comment>
<proteinExistence type="inferred from homology"/>
<protein>
    <recommendedName>
        <fullName evidence="1">Large ribosomal subunit protein uL2</fullName>
    </recommendedName>
    <alternativeName>
        <fullName evidence="3">50S ribosomal protein L2</fullName>
    </alternativeName>
</protein>
<keyword id="KW-1185">Reference proteome</keyword>
<keyword id="KW-0687">Ribonucleoprotein</keyword>
<keyword id="KW-0689">Ribosomal protein</keyword>
<keyword id="KW-0694">RNA-binding</keyword>
<keyword id="KW-0699">rRNA-binding</keyword>
<organism>
    <name type="scientific">Micrococcus luteus (strain ATCC 4698 / DSM 20030 / JCM 1464 / CCM 169 / CCUG 5858 / IAM 1056 / NBRC 3333 / NCIMB 9278 / NCTC 2665 / VKM Ac-2230)</name>
    <name type="common">Micrococcus lysodeikticus</name>
    <dbReference type="NCBI Taxonomy" id="465515"/>
    <lineage>
        <taxon>Bacteria</taxon>
        <taxon>Bacillati</taxon>
        <taxon>Actinomycetota</taxon>
        <taxon>Actinomycetes</taxon>
        <taxon>Micrococcales</taxon>
        <taxon>Micrococcaceae</taxon>
        <taxon>Micrococcus</taxon>
    </lineage>
</organism>
<name>RL2_MICLC</name>
<evidence type="ECO:0000255" key="1">
    <source>
        <dbReference type="HAMAP-Rule" id="MF_01320"/>
    </source>
</evidence>
<evidence type="ECO:0000256" key="2">
    <source>
        <dbReference type="SAM" id="MobiDB-lite"/>
    </source>
</evidence>
<evidence type="ECO:0000305" key="3"/>
<gene>
    <name evidence="1" type="primary">rplB</name>
    <name type="ordered locus">Mlut_17130</name>
</gene>
<feature type="chain" id="PRO_1000214453" description="Large ribosomal subunit protein uL2">
    <location>
        <begin position="1"/>
        <end position="279"/>
    </location>
</feature>
<feature type="region of interest" description="Disordered" evidence="2">
    <location>
        <begin position="34"/>
        <end position="58"/>
    </location>
</feature>
<feature type="region of interest" description="Disordered" evidence="2">
    <location>
        <begin position="225"/>
        <end position="279"/>
    </location>
</feature>
<feature type="compositionally biased region" description="Basic and acidic residues" evidence="2">
    <location>
        <begin position="251"/>
        <end position="268"/>
    </location>
</feature>
<feature type="compositionally biased region" description="Basic residues" evidence="2">
    <location>
        <begin position="269"/>
        <end position="279"/>
    </location>
</feature>